<comment type="function">
    <text evidence="1">Represses transcription of the icaADBC operon necessary for biofilm production.</text>
</comment>
<comment type="subunit">
    <text evidence="1">Homodimer.</text>
</comment>
<comment type="miscellaneous">
    <text evidence="1">Binding to the ica operator DNA involves two IcaR dimers and is highly cooperative.</text>
</comment>
<feature type="chain" id="PRO_0000070599" description="Biofilm operon icaADBC HTH-type negative transcriptional regulator IcaR">
    <location>
        <begin position="1"/>
        <end position="186"/>
    </location>
</feature>
<feature type="domain" description="HTH tetR-type" evidence="2">
    <location>
        <begin position="1"/>
        <end position="59"/>
    </location>
</feature>
<feature type="DNA-binding region" description="H-T-H motif" evidence="2">
    <location>
        <begin position="22"/>
        <end position="41"/>
    </location>
</feature>
<dbReference type="EMBL" id="BA000018">
    <property type="protein sequence ID" value="BAB43763.1"/>
    <property type="molecule type" value="Genomic_DNA"/>
</dbReference>
<dbReference type="RefSeq" id="WP_000653261.1">
    <property type="nucleotide sequence ID" value="NC_002745.2"/>
</dbReference>
<dbReference type="SMR" id="Q7A352"/>
<dbReference type="EnsemblBacteria" id="BAB43763">
    <property type="protein sequence ID" value="BAB43763"/>
    <property type="gene ID" value="BAB43763"/>
</dbReference>
<dbReference type="KEGG" id="sau:SA2458"/>
<dbReference type="HOGENOM" id="CLU_124987_0_0_9"/>
<dbReference type="GO" id="GO:0003677">
    <property type="term" value="F:DNA binding"/>
    <property type="evidence" value="ECO:0007669"/>
    <property type="project" value="UniProtKB-KW"/>
</dbReference>
<dbReference type="Gene3D" id="1.10.357.10">
    <property type="entry name" value="Tetracycline Repressor, domain 2"/>
    <property type="match status" value="1"/>
</dbReference>
<dbReference type="InterPro" id="IPR009057">
    <property type="entry name" value="Homeodomain-like_sf"/>
</dbReference>
<dbReference type="InterPro" id="IPR050624">
    <property type="entry name" value="HTH-type_Tx_Regulator"/>
</dbReference>
<dbReference type="InterPro" id="IPR001647">
    <property type="entry name" value="HTH_TetR"/>
</dbReference>
<dbReference type="InterPro" id="IPR041646">
    <property type="entry name" value="IcaR_C"/>
</dbReference>
<dbReference type="PANTHER" id="PTHR43479">
    <property type="entry name" value="ACREF/ENVCD OPERON REPRESSOR-RELATED"/>
    <property type="match status" value="1"/>
</dbReference>
<dbReference type="PANTHER" id="PTHR43479:SF11">
    <property type="entry name" value="ACREF_ENVCD OPERON REPRESSOR-RELATED"/>
    <property type="match status" value="1"/>
</dbReference>
<dbReference type="Pfam" id="PF18665">
    <property type="entry name" value="TetR_C_37"/>
    <property type="match status" value="1"/>
</dbReference>
<dbReference type="Pfam" id="PF00440">
    <property type="entry name" value="TetR_N"/>
    <property type="match status" value="1"/>
</dbReference>
<dbReference type="PRINTS" id="PR00455">
    <property type="entry name" value="HTHTETR"/>
</dbReference>
<dbReference type="SUPFAM" id="SSF46689">
    <property type="entry name" value="Homeodomain-like"/>
    <property type="match status" value="1"/>
</dbReference>
<dbReference type="PROSITE" id="PS50977">
    <property type="entry name" value="HTH_TETR_2"/>
    <property type="match status" value="1"/>
</dbReference>
<name>ICAR_STAAN</name>
<sequence length="186" mass="21987">MKDKIIDNAITLFSEKGYDGTTLDDIAKSVNIKKASLYYHFDSKKSIYEQSVKCCFDYLNNIIMMNQNKSNYSIDALYQFLFEFIFDIEERYIRMYVQLSNTPEEFSGNIYGQIQDLNQSLSKEIAKFYDESKIKMTKEDFQNLILLFLESWYLKASFSQKFGAVEESKSQFKDEVYSLLNIFLKK</sequence>
<gene>
    <name type="primary">icaR</name>
    <name type="ordered locus">SA2458</name>
</gene>
<accession>Q7A352</accession>
<evidence type="ECO:0000250" key="1"/>
<evidence type="ECO:0000255" key="2">
    <source>
        <dbReference type="PROSITE-ProRule" id="PRU00335"/>
    </source>
</evidence>
<keyword id="KW-0238">DNA-binding</keyword>
<keyword id="KW-0678">Repressor</keyword>
<keyword id="KW-0804">Transcription</keyword>
<keyword id="KW-0805">Transcription regulation</keyword>
<organism>
    <name type="scientific">Staphylococcus aureus (strain N315)</name>
    <dbReference type="NCBI Taxonomy" id="158879"/>
    <lineage>
        <taxon>Bacteria</taxon>
        <taxon>Bacillati</taxon>
        <taxon>Bacillota</taxon>
        <taxon>Bacilli</taxon>
        <taxon>Bacillales</taxon>
        <taxon>Staphylococcaceae</taxon>
        <taxon>Staphylococcus</taxon>
    </lineage>
</organism>
<protein>
    <recommendedName>
        <fullName>Biofilm operon icaADBC HTH-type negative transcriptional regulator IcaR</fullName>
    </recommendedName>
    <alternativeName>
        <fullName>Intercellular adhesion protein R</fullName>
    </alternativeName>
</protein>
<reference key="1">
    <citation type="journal article" date="2001" name="Lancet">
        <title>Whole genome sequencing of meticillin-resistant Staphylococcus aureus.</title>
        <authorList>
            <person name="Kuroda M."/>
            <person name="Ohta T."/>
            <person name="Uchiyama I."/>
            <person name="Baba T."/>
            <person name="Yuzawa H."/>
            <person name="Kobayashi I."/>
            <person name="Cui L."/>
            <person name="Oguchi A."/>
            <person name="Aoki K."/>
            <person name="Nagai Y."/>
            <person name="Lian J.-Q."/>
            <person name="Ito T."/>
            <person name="Kanamori M."/>
            <person name="Matsumaru H."/>
            <person name="Maruyama A."/>
            <person name="Murakami H."/>
            <person name="Hosoyama A."/>
            <person name="Mizutani-Ui Y."/>
            <person name="Takahashi N.K."/>
            <person name="Sawano T."/>
            <person name="Inoue R."/>
            <person name="Kaito C."/>
            <person name="Sekimizu K."/>
            <person name="Hirakawa H."/>
            <person name="Kuhara S."/>
            <person name="Goto S."/>
            <person name="Yabuzaki J."/>
            <person name="Kanehisa M."/>
            <person name="Yamashita A."/>
            <person name="Oshima K."/>
            <person name="Furuya K."/>
            <person name="Yoshino C."/>
            <person name="Shiba T."/>
            <person name="Hattori M."/>
            <person name="Ogasawara N."/>
            <person name="Hayashi H."/>
            <person name="Hiramatsu K."/>
        </authorList>
    </citation>
    <scope>NUCLEOTIDE SEQUENCE [LARGE SCALE GENOMIC DNA]</scope>
    <source>
        <strain>N315</strain>
    </source>
</reference>
<proteinExistence type="inferred from homology"/>